<comment type="function">
    <text evidence="1">Allows the formation of correctly charged Gln-tRNA(Gln) through the transamidation of misacylated Glu-tRNA(Gln) in organisms which lack glutaminyl-tRNA synthetase. The reaction takes place in the presence of glutamine and ATP through an activated gamma-phospho-Glu-tRNA(Gln).</text>
</comment>
<comment type="catalytic activity">
    <reaction evidence="1">
        <text>L-glutamyl-tRNA(Gln) + L-glutamine + ATP + H2O = L-glutaminyl-tRNA(Gln) + L-glutamate + ADP + phosphate + H(+)</text>
        <dbReference type="Rhea" id="RHEA:17521"/>
        <dbReference type="Rhea" id="RHEA-COMP:9681"/>
        <dbReference type="Rhea" id="RHEA-COMP:9684"/>
        <dbReference type="ChEBI" id="CHEBI:15377"/>
        <dbReference type="ChEBI" id="CHEBI:15378"/>
        <dbReference type="ChEBI" id="CHEBI:29985"/>
        <dbReference type="ChEBI" id="CHEBI:30616"/>
        <dbReference type="ChEBI" id="CHEBI:43474"/>
        <dbReference type="ChEBI" id="CHEBI:58359"/>
        <dbReference type="ChEBI" id="CHEBI:78520"/>
        <dbReference type="ChEBI" id="CHEBI:78521"/>
        <dbReference type="ChEBI" id="CHEBI:456216"/>
        <dbReference type="EC" id="6.3.5.7"/>
    </reaction>
</comment>
<comment type="subunit">
    <text evidence="1">Heterotrimer of A, B and C subunits.</text>
</comment>
<comment type="similarity">
    <text evidence="1">Belongs to the amidase family. GatA subfamily.</text>
</comment>
<accession>A9MBN4</accession>
<gene>
    <name evidence="1" type="primary">gatA</name>
    <name type="ordered locus">BCAN_B0595</name>
</gene>
<evidence type="ECO:0000255" key="1">
    <source>
        <dbReference type="HAMAP-Rule" id="MF_00120"/>
    </source>
</evidence>
<sequence length="493" mass="52447">MSELTALTIAEARDKLKAKAITATELTDAYLSAIDAANDAINAYVAVTHDQARSMAKASDERIAKGEAGALEGIPLGVKDLFATKGVHTQACSHILDGFKPEYESTVTANLWADGAVMLGKLNMDEFAMGSSNETSYYGPVKNPWRAKGSNADLVPGGSSGGSAAAVAAHLCAGATATDTGGSIRQPAAFTGTVGIKPTYGRVSRWGTVAFASSLDQAGPIARDVRDAAILMKSMASLDLKDTTSVDLPVPDYEAALGRSVKGMKIGIPREYRVDGMPGEIEELWQKGIQYLKDAGAEIVDISLPHTKYALPAYYIVAPAEASSNLARYDGVRYGLRVPGKDIADMYEQTRAAGFGKEVKRRIMIGTYVLSAGYYDAYYLRAQKVRTLIKKDFEDVFAKGVDAILTPATPSAAFGLADEVLANDPVKMYLNDIFTVTVNMAGLPGIAVPAGLNGQGLPLGLQLIGRPFEEETLFQAAHVIEQAAGRFTPAKWW</sequence>
<reference key="1">
    <citation type="submission" date="2007-10" db="EMBL/GenBank/DDBJ databases">
        <title>Brucella canis ATCC 23365 whole genome shotgun sequencing project.</title>
        <authorList>
            <person name="Setubal J.C."/>
            <person name="Bowns C."/>
            <person name="Boyle S."/>
            <person name="Crasta O.R."/>
            <person name="Czar M.J."/>
            <person name="Dharmanolla C."/>
            <person name="Gillespie J.J."/>
            <person name="Kenyon R.W."/>
            <person name="Lu J."/>
            <person name="Mane S."/>
            <person name="Mohapatra S."/>
            <person name="Nagrani S."/>
            <person name="Purkayastha A."/>
            <person name="Rajasimha H.K."/>
            <person name="Shallom J.M."/>
            <person name="Shallom S."/>
            <person name="Shukla M."/>
            <person name="Snyder E.E."/>
            <person name="Sobral B.W."/>
            <person name="Wattam A.R."/>
            <person name="Will R."/>
            <person name="Williams K."/>
            <person name="Yoo H."/>
            <person name="Bruce D."/>
            <person name="Detter C."/>
            <person name="Munk C."/>
            <person name="Brettin T.S."/>
        </authorList>
    </citation>
    <scope>NUCLEOTIDE SEQUENCE [LARGE SCALE GENOMIC DNA]</scope>
    <source>
        <strain>ATCC 23365 / NCTC 10854 / RM-666</strain>
    </source>
</reference>
<keyword id="KW-0067">ATP-binding</keyword>
<keyword id="KW-0436">Ligase</keyword>
<keyword id="KW-0547">Nucleotide-binding</keyword>
<keyword id="KW-0648">Protein biosynthesis</keyword>
<keyword id="KW-1185">Reference proteome</keyword>
<dbReference type="EC" id="6.3.5.7" evidence="1"/>
<dbReference type="EMBL" id="CP000873">
    <property type="protein sequence ID" value="ABX63771.1"/>
    <property type="molecule type" value="Genomic_DNA"/>
</dbReference>
<dbReference type="RefSeq" id="WP_004689008.1">
    <property type="nucleotide sequence ID" value="NC_010104.1"/>
</dbReference>
<dbReference type="SMR" id="A9MBN4"/>
<dbReference type="GeneID" id="55592265"/>
<dbReference type="KEGG" id="bcs:BCAN_B0595"/>
<dbReference type="HOGENOM" id="CLU_009600_0_3_5"/>
<dbReference type="PhylomeDB" id="A9MBN4"/>
<dbReference type="Proteomes" id="UP000001385">
    <property type="component" value="Chromosome II"/>
</dbReference>
<dbReference type="GO" id="GO:0030956">
    <property type="term" value="C:glutamyl-tRNA(Gln) amidotransferase complex"/>
    <property type="evidence" value="ECO:0007669"/>
    <property type="project" value="InterPro"/>
</dbReference>
<dbReference type="GO" id="GO:0005524">
    <property type="term" value="F:ATP binding"/>
    <property type="evidence" value="ECO:0007669"/>
    <property type="project" value="UniProtKB-KW"/>
</dbReference>
<dbReference type="GO" id="GO:0050567">
    <property type="term" value="F:glutaminyl-tRNA synthase (glutamine-hydrolyzing) activity"/>
    <property type="evidence" value="ECO:0007669"/>
    <property type="project" value="UniProtKB-UniRule"/>
</dbReference>
<dbReference type="GO" id="GO:0006412">
    <property type="term" value="P:translation"/>
    <property type="evidence" value="ECO:0007669"/>
    <property type="project" value="UniProtKB-UniRule"/>
</dbReference>
<dbReference type="Gene3D" id="3.90.1300.10">
    <property type="entry name" value="Amidase signature (AS) domain"/>
    <property type="match status" value="1"/>
</dbReference>
<dbReference type="HAMAP" id="MF_00120">
    <property type="entry name" value="GatA"/>
    <property type="match status" value="1"/>
</dbReference>
<dbReference type="InterPro" id="IPR000120">
    <property type="entry name" value="Amidase"/>
</dbReference>
<dbReference type="InterPro" id="IPR020556">
    <property type="entry name" value="Amidase_CS"/>
</dbReference>
<dbReference type="InterPro" id="IPR023631">
    <property type="entry name" value="Amidase_dom"/>
</dbReference>
<dbReference type="InterPro" id="IPR036928">
    <property type="entry name" value="AS_sf"/>
</dbReference>
<dbReference type="InterPro" id="IPR004412">
    <property type="entry name" value="GatA"/>
</dbReference>
<dbReference type="NCBIfam" id="TIGR00132">
    <property type="entry name" value="gatA"/>
    <property type="match status" value="1"/>
</dbReference>
<dbReference type="PANTHER" id="PTHR11895:SF151">
    <property type="entry name" value="GLUTAMYL-TRNA(GLN) AMIDOTRANSFERASE SUBUNIT A"/>
    <property type="match status" value="1"/>
</dbReference>
<dbReference type="PANTHER" id="PTHR11895">
    <property type="entry name" value="TRANSAMIDASE"/>
    <property type="match status" value="1"/>
</dbReference>
<dbReference type="Pfam" id="PF01425">
    <property type="entry name" value="Amidase"/>
    <property type="match status" value="1"/>
</dbReference>
<dbReference type="SUPFAM" id="SSF75304">
    <property type="entry name" value="Amidase signature (AS) enzymes"/>
    <property type="match status" value="1"/>
</dbReference>
<dbReference type="PROSITE" id="PS00571">
    <property type="entry name" value="AMIDASES"/>
    <property type="match status" value="1"/>
</dbReference>
<proteinExistence type="inferred from homology"/>
<name>GATA_BRUC2</name>
<feature type="chain" id="PRO_1000076122" description="Glutamyl-tRNA(Gln) amidotransferase subunit A">
    <location>
        <begin position="1"/>
        <end position="493"/>
    </location>
</feature>
<feature type="active site" description="Charge relay system" evidence="1">
    <location>
        <position position="79"/>
    </location>
</feature>
<feature type="active site" description="Charge relay system" evidence="1">
    <location>
        <position position="159"/>
    </location>
</feature>
<feature type="active site" description="Acyl-ester intermediate" evidence="1">
    <location>
        <position position="183"/>
    </location>
</feature>
<protein>
    <recommendedName>
        <fullName evidence="1">Glutamyl-tRNA(Gln) amidotransferase subunit A</fullName>
        <shortName evidence="1">Glu-ADT subunit A</shortName>
        <ecNumber evidence="1">6.3.5.7</ecNumber>
    </recommendedName>
</protein>
<organism>
    <name type="scientific">Brucella canis (strain ATCC 23365 / NCTC 10854 / RM-666)</name>
    <dbReference type="NCBI Taxonomy" id="483179"/>
    <lineage>
        <taxon>Bacteria</taxon>
        <taxon>Pseudomonadati</taxon>
        <taxon>Pseudomonadota</taxon>
        <taxon>Alphaproteobacteria</taxon>
        <taxon>Hyphomicrobiales</taxon>
        <taxon>Brucellaceae</taxon>
        <taxon>Brucella/Ochrobactrum group</taxon>
        <taxon>Brucella</taxon>
    </lineage>
</organism>